<evidence type="ECO:0000250" key="1"/>
<evidence type="ECO:0000255" key="2"/>
<evidence type="ECO:0000305" key="3"/>
<protein>
    <recommendedName>
        <fullName>Bombyxin B-8</fullName>
        <shortName>BBX-B8</shortName>
    </recommendedName>
    <alternativeName>
        <fullName>4K-prothoracicotropic hormone</fullName>
        <shortName>4K-PTTH</shortName>
    </alternativeName>
    <component>
        <recommendedName>
            <fullName>Bombyxin B-8 B chain</fullName>
        </recommendedName>
    </component>
    <component>
        <recommendedName>
            <fullName>Bombyxin B-8 A chain</fullName>
        </recommendedName>
    </component>
</protein>
<organism>
    <name type="scientific">Bombyx mori</name>
    <name type="common">Silk moth</name>
    <dbReference type="NCBI Taxonomy" id="7091"/>
    <lineage>
        <taxon>Eukaryota</taxon>
        <taxon>Metazoa</taxon>
        <taxon>Ecdysozoa</taxon>
        <taxon>Arthropoda</taxon>
        <taxon>Hexapoda</taxon>
        <taxon>Insecta</taxon>
        <taxon>Pterygota</taxon>
        <taxon>Neoptera</taxon>
        <taxon>Endopterygota</taxon>
        <taxon>Lepidoptera</taxon>
        <taxon>Glossata</taxon>
        <taxon>Ditrysia</taxon>
        <taxon>Bombycoidea</taxon>
        <taxon>Bombycidae</taxon>
        <taxon>Bombycinae</taxon>
        <taxon>Bombyx</taxon>
    </lineage>
</organism>
<gene>
    <name type="primary">BBXB8</name>
</gene>
<keyword id="KW-0165">Cleavage on pair of basic residues</keyword>
<keyword id="KW-1015">Disulfide bond</keyword>
<keyword id="KW-0372">Hormone</keyword>
<keyword id="KW-1185">Reference proteome</keyword>
<keyword id="KW-0964">Secreted</keyword>
<keyword id="KW-0732">Signal</keyword>
<feature type="signal peptide" evidence="2">
    <location>
        <begin position="1"/>
        <end position="18"/>
    </location>
</feature>
<feature type="peptide" id="PRO_0000016010" description="Bombyxin B-8 B chain">
    <location>
        <begin position="19"/>
        <end position="44"/>
    </location>
</feature>
<feature type="propeptide" id="PRO_0000016011" description="C peptide like">
    <location>
        <begin position="47"/>
        <end position="65"/>
    </location>
</feature>
<feature type="peptide" id="PRO_0000016012" description="Bombyxin B-8 A chain">
    <location>
        <begin position="68"/>
        <end position="88"/>
    </location>
</feature>
<feature type="disulfide bond" description="Interchain (between B and A chains)" evidence="1">
    <location>
        <begin position="28"/>
        <end position="74"/>
    </location>
</feature>
<feature type="disulfide bond" description="Interchain (between B and A chains)" evidence="1">
    <location>
        <begin position="40"/>
        <end position="87"/>
    </location>
</feature>
<feature type="disulfide bond" evidence="1">
    <location>
        <begin position="73"/>
        <end position="78"/>
    </location>
</feature>
<proteinExistence type="inferred from homology"/>
<name>BXB8_BOMMO</name>
<dbReference type="EMBL" id="D00784">
    <property type="protein sequence ID" value="BAA00680.1"/>
    <property type="molecule type" value="Genomic_DNA"/>
</dbReference>
<dbReference type="PIR" id="S69489">
    <property type="entry name" value="S69489"/>
</dbReference>
<dbReference type="RefSeq" id="NP_001121790.1">
    <property type="nucleotide sequence ID" value="NM_001128318.1"/>
</dbReference>
<dbReference type="SMR" id="P26742"/>
<dbReference type="STRING" id="7091.P26742"/>
<dbReference type="PaxDb" id="7091-BGIBMGA011971-TA"/>
<dbReference type="EnsemblMetazoa" id="NM_001128318.2">
    <property type="protein sequence ID" value="NP_001121790.1"/>
    <property type="gene ID" value="GeneID_100169718"/>
</dbReference>
<dbReference type="GeneID" id="100169718"/>
<dbReference type="KEGG" id="bmor:100169718"/>
<dbReference type="CTD" id="100169718"/>
<dbReference type="eggNOG" id="ENOG502SESX">
    <property type="taxonomic scope" value="Eukaryota"/>
</dbReference>
<dbReference type="HOGENOM" id="CLU_125164_2_0_1"/>
<dbReference type="InParanoid" id="P26742"/>
<dbReference type="OrthoDB" id="493443at7088"/>
<dbReference type="Proteomes" id="UP000005204">
    <property type="component" value="Unassembled WGS sequence"/>
</dbReference>
<dbReference type="GO" id="GO:0005615">
    <property type="term" value="C:extracellular space"/>
    <property type="evidence" value="ECO:0007669"/>
    <property type="project" value="InterPro"/>
</dbReference>
<dbReference type="GO" id="GO:0008083">
    <property type="term" value="F:growth factor activity"/>
    <property type="evidence" value="ECO:0007669"/>
    <property type="project" value="InterPro"/>
</dbReference>
<dbReference type="GO" id="GO:0005179">
    <property type="term" value="F:hormone activity"/>
    <property type="evidence" value="ECO:0007669"/>
    <property type="project" value="UniProtKB-KW"/>
</dbReference>
<dbReference type="CDD" id="cd04366">
    <property type="entry name" value="IlGF_insulin_bombyxin_like"/>
    <property type="match status" value="1"/>
</dbReference>
<dbReference type="Gene3D" id="1.10.100.10">
    <property type="entry name" value="Insulin-like"/>
    <property type="match status" value="1"/>
</dbReference>
<dbReference type="InterPro" id="IPR017097">
    <property type="entry name" value="Bombyxin"/>
</dbReference>
<dbReference type="InterPro" id="IPR027285">
    <property type="entry name" value="Bombyxin_B"/>
</dbReference>
<dbReference type="InterPro" id="IPR016179">
    <property type="entry name" value="Insulin-like"/>
</dbReference>
<dbReference type="InterPro" id="IPR036438">
    <property type="entry name" value="Insulin-like_sf"/>
</dbReference>
<dbReference type="InterPro" id="IPR022353">
    <property type="entry name" value="Insulin_CS"/>
</dbReference>
<dbReference type="InterPro" id="IPR022352">
    <property type="entry name" value="Insulin_family"/>
</dbReference>
<dbReference type="PANTHER" id="PTHR46886">
    <property type="entry name" value="INSULIN-LIKE GROWTH FACTOR II"/>
    <property type="match status" value="1"/>
</dbReference>
<dbReference type="PANTHER" id="PTHR46886:SF1">
    <property type="entry name" value="INSULIN-LIKE GROWTH FACTOR II"/>
    <property type="match status" value="1"/>
</dbReference>
<dbReference type="Pfam" id="PF00049">
    <property type="entry name" value="Insulin"/>
    <property type="match status" value="2"/>
</dbReference>
<dbReference type="PIRSF" id="PIRSF037038">
    <property type="entry name" value="Bombyxin"/>
    <property type="match status" value="1"/>
</dbReference>
<dbReference type="PIRSF" id="PIRSF500313">
    <property type="entry name" value="Bombyxin_B"/>
    <property type="match status" value="1"/>
</dbReference>
<dbReference type="PRINTS" id="PR02003">
    <property type="entry name" value="BOMBYXIN"/>
</dbReference>
<dbReference type="PRINTS" id="PR00276">
    <property type="entry name" value="INSULINFAMLY"/>
</dbReference>
<dbReference type="SMART" id="SM00078">
    <property type="entry name" value="IlGF"/>
    <property type="match status" value="1"/>
</dbReference>
<dbReference type="SUPFAM" id="SSF56994">
    <property type="entry name" value="Insulin-like"/>
    <property type="match status" value="1"/>
</dbReference>
<dbReference type="PROSITE" id="PS00262">
    <property type="entry name" value="INSULIN"/>
    <property type="match status" value="1"/>
</dbReference>
<comment type="function">
    <text>Brain peptide responsible for activation of prothoracic glands to produce ecdysone in insects.</text>
</comment>
<comment type="subunit">
    <text>Heterodimer of a B chain and an A chain linked by two disulfide bonds.</text>
</comment>
<comment type="subcellular location">
    <subcellularLocation>
        <location>Secreted</location>
    </subcellularLocation>
</comment>
<comment type="miscellaneous">
    <text>Silk worm has two kinds of PTTH: 4K-PTTH and 22K-PTTH; there are many forms of 4K-PTTH.</text>
</comment>
<comment type="similarity">
    <text evidence="3">Belongs to the insulin family.</text>
</comment>
<accession>P26742</accession>
<reference key="1">
    <citation type="journal article" date="1996" name="J. Mol. Biol.">
        <title>Multiple gene copies for bombyxin, an insulin-related peptide of the silkmoth Bombyx mori: structural signs for gene rearrangement and duplication responsible for generation of multiple molecular forms of bombyxin.</title>
        <authorList>
            <person name="Kondo H."/>
            <person name="Ino M."/>
            <person name="Suzuki A."/>
            <person name="Ishizaki H."/>
            <person name="Iwami M."/>
        </authorList>
    </citation>
    <scope>NUCLEOTIDE SEQUENCE [GENOMIC DNA]</scope>
</reference>
<sequence length="88" mass="9706">MKTSVIFVLIVLNLMWSGEAQEVARTYCGSHLADTLADLCFGVVKRGGAQYAPYFWQKAYLGSRGKRGVVDECCFRPCTLDVLASYCG</sequence>